<sequence length="388" mass="44444">MPNFQKFETFDKLTTVPCPYAPDCGGCQHIGVPYGHQAQNKINDLSGLFTAAEVAFPKPLKVLSAGPAHLRDRLDFSLQDGRLGLYRTDRHEILDIEVCAQLSPALQGWLSEFRKIQWPFKRGSFRLRVGPEGQRGLWIDLANVDIKTLLDEQNILRSLQQQAFVEIGQRRKVPVWTGNEFKLRDPEHHVWFQSWMNDIPVNLYCQVASFTQPSHTANKIICDVIYDWVKRYKAQRLIEFGSGIGNLTFPALAGAESVLACEIDELSLQGLERSLNELPASMSHLKDRVTIYRRDFQKKLTQDFSQFDGVLANPPRSGLMGFLNPLKSLAPEQRPEFFIYMSCYPESMARDLVTLQECGYRMQEVYIVDQFPQTDHYEVLGLLQREKA</sequence>
<name>Y2056_BDEBA</name>
<feature type="chain" id="PRO_0000161956" description="Uncharacterized RNA methyltransferase Bd2056">
    <location>
        <begin position="1"/>
        <end position="388"/>
    </location>
</feature>
<feature type="active site" description="Nucleophile" evidence="2">
    <location>
        <position position="343"/>
    </location>
</feature>
<feature type="binding site" evidence="1">
    <location>
        <position position="18"/>
    </location>
    <ligand>
        <name>[4Fe-4S] cluster</name>
        <dbReference type="ChEBI" id="CHEBI:49883"/>
    </ligand>
</feature>
<feature type="binding site" evidence="1">
    <location>
        <position position="24"/>
    </location>
    <ligand>
        <name>[4Fe-4S] cluster</name>
        <dbReference type="ChEBI" id="CHEBI:49883"/>
    </ligand>
</feature>
<feature type="binding site" evidence="1">
    <location>
        <position position="27"/>
    </location>
    <ligand>
        <name>[4Fe-4S] cluster</name>
        <dbReference type="ChEBI" id="CHEBI:49883"/>
    </ligand>
</feature>
<feature type="binding site" evidence="1">
    <location>
        <position position="99"/>
    </location>
    <ligand>
        <name>[4Fe-4S] cluster</name>
        <dbReference type="ChEBI" id="CHEBI:49883"/>
    </ligand>
</feature>
<feature type="binding site" evidence="2">
    <location>
        <position position="212"/>
    </location>
    <ligand>
        <name>S-adenosyl-L-methionine</name>
        <dbReference type="ChEBI" id="CHEBI:59789"/>
    </ligand>
</feature>
<feature type="binding site" evidence="2">
    <location>
        <position position="262"/>
    </location>
    <ligand>
        <name>S-adenosyl-L-methionine</name>
        <dbReference type="ChEBI" id="CHEBI:59789"/>
    </ligand>
</feature>
<feature type="binding site" evidence="2">
    <location>
        <position position="313"/>
    </location>
    <ligand>
        <name>S-adenosyl-L-methionine</name>
        <dbReference type="ChEBI" id="CHEBI:59789"/>
    </ligand>
</feature>
<reference key="1">
    <citation type="journal article" date="2004" name="Science">
        <title>A predator unmasked: life cycle of Bdellovibrio bacteriovorus from a genomic perspective.</title>
        <authorList>
            <person name="Rendulic S."/>
            <person name="Jagtap P."/>
            <person name="Rosinus A."/>
            <person name="Eppinger M."/>
            <person name="Baar C."/>
            <person name="Lanz C."/>
            <person name="Keller H."/>
            <person name="Lambert C."/>
            <person name="Evans K.J."/>
            <person name="Goesmann A."/>
            <person name="Meyer F."/>
            <person name="Sockett R.E."/>
            <person name="Schuster S.C."/>
        </authorList>
    </citation>
    <scope>NUCLEOTIDE SEQUENCE [LARGE SCALE GENOMIC DNA]</scope>
    <source>
        <strain>ATCC 15356 / DSM 50701 / NCIMB 9529 / HD100</strain>
    </source>
</reference>
<evidence type="ECO:0000250" key="1"/>
<evidence type="ECO:0000255" key="2">
    <source>
        <dbReference type="PROSITE-ProRule" id="PRU01024"/>
    </source>
</evidence>
<gene>
    <name type="ordered locus">Bd2056</name>
</gene>
<accession>Q6MLF5</accession>
<organism>
    <name type="scientific">Bdellovibrio bacteriovorus (strain ATCC 15356 / DSM 50701 / NCIMB 9529 / HD100)</name>
    <dbReference type="NCBI Taxonomy" id="264462"/>
    <lineage>
        <taxon>Bacteria</taxon>
        <taxon>Pseudomonadati</taxon>
        <taxon>Bdellovibrionota</taxon>
        <taxon>Bdellovibrionia</taxon>
        <taxon>Bdellovibrionales</taxon>
        <taxon>Pseudobdellovibrionaceae</taxon>
        <taxon>Bdellovibrio</taxon>
    </lineage>
</organism>
<protein>
    <recommendedName>
        <fullName>Uncharacterized RNA methyltransferase Bd2056</fullName>
        <ecNumber>2.1.1.-</ecNumber>
    </recommendedName>
</protein>
<dbReference type="EC" id="2.1.1.-"/>
<dbReference type="EMBL" id="BX842651">
    <property type="protein sequence ID" value="CAE79902.1"/>
    <property type="molecule type" value="Genomic_DNA"/>
</dbReference>
<dbReference type="RefSeq" id="WP_011164504.1">
    <property type="nucleotide sequence ID" value="NC_005363.1"/>
</dbReference>
<dbReference type="SMR" id="Q6MLF5"/>
<dbReference type="STRING" id="264462.Bd2056"/>
<dbReference type="GeneID" id="93013003"/>
<dbReference type="KEGG" id="bba:Bd2056"/>
<dbReference type="eggNOG" id="COG2265">
    <property type="taxonomic scope" value="Bacteria"/>
</dbReference>
<dbReference type="HOGENOM" id="CLU_705277_0_0_7"/>
<dbReference type="Proteomes" id="UP000008080">
    <property type="component" value="Chromosome"/>
</dbReference>
<dbReference type="GO" id="GO:0051539">
    <property type="term" value="F:4 iron, 4 sulfur cluster binding"/>
    <property type="evidence" value="ECO:0007669"/>
    <property type="project" value="UniProtKB-KW"/>
</dbReference>
<dbReference type="GO" id="GO:0046872">
    <property type="term" value="F:metal ion binding"/>
    <property type="evidence" value="ECO:0007669"/>
    <property type="project" value="UniProtKB-KW"/>
</dbReference>
<dbReference type="GO" id="GO:0000179">
    <property type="term" value="F:rRNA (adenine-N6,N6-)-dimethyltransferase activity"/>
    <property type="evidence" value="ECO:0007669"/>
    <property type="project" value="InterPro"/>
</dbReference>
<dbReference type="GO" id="GO:0070041">
    <property type="term" value="F:rRNA (uridine-C5-)-methyltransferase activity"/>
    <property type="evidence" value="ECO:0007669"/>
    <property type="project" value="TreeGrafter"/>
</dbReference>
<dbReference type="GO" id="GO:0070475">
    <property type="term" value="P:rRNA base methylation"/>
    <property type="evidence" value="ECO:0007669"/>
    <property type="project" value="TreeGrafter"/>
</dbReference>
<dbReference type="CDD" id="cd02440">
    <property type="entry name" value="AdoMet_MTases"/>
    <property type="match status" value="1"/>
</dbReference>
<dbReference type="Gene3D" id="2.40.50.1070">
    <property type="match status" value="1"/>
</dbReference>
<dbReference type="Gene3D" id="3.40.50.150">
    <property type="entry name" value="Vaccinia Virus protein VP39"/>
    <property type="match status" value="1"/>
</dbReference>
<dbReference type="InterPro" id="IPR030390">
    <property type="entry name" value="MeTrfase_TrmA_AS"/>
</dbReference>
<dbReference type="InterPro" id="IPR030391">
    <property type="entry name" value="MeTrfase_TrmA_CS"/>
</dbReference>
<dbReference type="InterPro" id="IPR020596">
    <property type="entry name" value="rRNA_Ade_Mease_Trfase_CS"/>
</dbReference>
<dbReference type="InterPro" id="IPR029063">
    <property type="entry name" value="SAM-dependent_MTases_sf"/>
</dbReference>
<dbReference type="InterPro" id="IPR010280">
    <property type="entry name" value="U5_MeTrfase_fam"/>
</dbReference>
<dbReference type="PANTHER" id="PTHR11061">
    <property type="entry name" value="RNA M5U METHYLTRANSFERASE"/>
    <property type="match status" value="1"/>
</dbReference>
<dbReference type="PANTHER" id="PTHR11061:SF30">
    <property type="entry name" value="TRNA (URACIL(54)-C(5))-METHYLTRANSFERASE"/>
    <property type="match status" value="1"/>
</dbReference>
<dbReference type="Pfam" id="PF05958">
    <property type="entry name" value="tRNA_U5-meth_tr"/>
    <property type="match status" value="1"/>
</dbReference>
<dbReference type="SUPFAM" id="SSF53335">
    <property type="entry name" value="S-adenosyl-L-methionine-dependent methyltransferases"/>
    <property type="match status" value="1"/>
</dbReference>
<dbReference type="PROSITE" id="PS01131">
    <property type="entry name" value="RRNA_A_DIMETH"/>
    <property type="match status" value="1"/>
</dbReference>
<dbReference type="PROSITE" id="PS51687">
    <property type="entry name" value="SAM_MT_RNA_M5U"/>
    <property type="match status" value="1"/>
</dbReference>
<dbReference type="PROSITE" id="PS01230">
    <property type="entry name" value="TRMA_1"/>
    <property type="match status" value="1"/>
</dbReference>
<dbReference type="PROSITE" id="PS01231">
    <property type="entry name" value="TRMA_2"/>
    <property type="match status" value="1"/>
</dbReference>
<proteinExistence type="inferred from homology"/>
<keyword id="KW-0004">4Fe-4S</keyword>
<keyword id="KW-0408">Iron</keyword>
<keyword id="KW-0411">Iron-sulfur</keyword>
<keyword id="KW-0479">Metal-binding</keyword>
<keyword id="KW-0489">Methyltransferase</keyword>
<keyword id="KW-1185">Reference proteome</keyword>
<keyword id="KW-0949">S-adenosyl-L-methionine</keyword>
<keyword id="KW-0808">Transferase</keyword>
<comment type="similarity">
    <text evidence="2">Belongs to the class I-like SAM-binding methyltransferase superfamily. RNA M5U methyltransferase family.</text>
</comment>